<keyword id="KW-0963">Cytoplasm</keyword>
<keyword id="KW-0324">Glycolysis</keyword>
<keyword id="KW-0456">Lyase</keyword>
<keyword id="KW-0460">Magnesium</keyword>
<keyword id="KW-0479">Metal-binding</keyword>
<keyword id="KW-0964">Secreted</keyword>
<protein>
    <recommendedName>
        <fullName evidence="1">Enolase</fullName>
        <ecNumber evidence="1">4.2.1.11</ecNumber>
    </recommendedName>
    <alternativeName>
        <fullName evidence="1">2-phospho-D-glycerate hydro-lyase</fullName>
    </alternativeName>
    <alternativeName>
        <fullName evidence="1">2-phosphoglycerate dehydratase</fullName>
    </alternativeName>
</protein>
<organism>
    <name type="scientific">Solibacter usitatus (strain Ellin6076)</name>
    <dbReference type="NCBI Taxonomy" id="234267"/>
    <lineage>
        <taxon>Bacteria</taxon>
        <taxon>Pseudomonadati</taxon>
        <taxon>Acidobacteriota</taxon>
        <taxon>Terriglobia</taxon>
        <taxon>Bryobacterales</taxon>
        <taxon>Solibacteraceae</taxon>
        <taxon>Candidatus Solibacter</taxon>
    </lineage>
</organism>
<evidence type="ECO:0000255" key="1">
    <source>
        <dbReference type="HAMAP-Rule" id="MF_00318"/>
    </source>
</evidence>
<dbReference type="EC" id="4.2.1.11" evidence="1"/>
<dbReference type="EMBL" id="CP000473">
    <property type="protein sequence ID" value="ABJ85334.1"/>
    <property type="molecule type" value="Genomic_DNA"/>
</dbReference>
<dbReference type="SMR" id="Q01YD1"/>
<dbReference type="FunCoup" id="Q01YD1">
    <property type="interactions" value="555"/>
</dbReference>
<dbReference type="STRING" id="234267.Acid_4373"/>
<dbReference type="KEGG" id="sus:Acid_4373"/>
<dbReference type="eggNOG" id="COG0148">
    <property type="taxonomic scope" value="Bacteria"/>
</dbReference>
<dbReference type="HOGENOM" id="CLU_031223_2_1_0"/>
<dbReference type="InParanoid" id="Q01YD1"/>
<dbReference type="OrthoDB" id="9804716at2"/>
<dbReference type="UniPathway" id="UPA00109">
    <property type="reaction ID" value="UER00187"/>
</dbReference>
<dbReference type="GO" id="GO:0009986">
    <property type="term" value="C:cell surface"/>
    <property type="evidence" value="ECO:0007669"/>
    <property type="project" value="UniProtKB-SubCell"/>
</dbReference>
<dbReference type="GO" id="GO:0005576">
    <property type="term" value="C:extracellular region"/>
    <property type="evidence" value="ECO:0007669"/>
    <property type="project" value="UniProtKB-SubCell"/>
</dbReference>
<dbReference type="GO" id="GO:0000015">
    <property type="term" value="C:phosphopyruvate hydratase complex"/>
    <property type="evidence" value="ECO:0007669"/>
    <property type="project" value="InterPro"/>
</dbReference>
<dbReference type="GO" id="GO:0000287">
    <property type="term" value="F:magnesium ion binding"/>
    <property type="evidence" value="ECO:0007669"/>
    <property type="project" value="UniProtKB-UniRule"/>
</dbReference>
<dbReference type="GO" id="GO:0004634">
    <property type="term" value="F:phosphopyruvate hydratase activity"/>
    <property type="evidence" value="ECO:0007669"/>
    <property type="project" value="UniProtKB-UniRule"/>
</dbReference>
<dbReference type="GO" id="GO:0006096">
    <property type="term" value="P:glycolytic process"/>
    <property type="evidence" value="ECO:0007669"/>
    <property type="project" value="UniProtKB-UniRule"/>
</dbReference>
<dbReference type="CDD" id="cd03313">
    <property type="entry name" value="enolase"/>
    <property type="match status" value="1"/>
</dbReference>
<dbReference type="FunFam" id="3.20.20.120:FF:000001">
    <property type="entry name" value="Enolase"/>
    <property type="match status" value="1"/>
</dbReference>
<dbReference type="FunFam" id="3.30.390.10:FF:000001">
    <property type="entry name" value="Enolase"/>
    <property type="match status" value="1"/>
</dbReference>
<dbReference type="Gene3D" id="3.20.20.120">
    <property type="entry name" value="Enolase-like C-terminal domain"/>
    <property type="match status" value="1"/>
</dbReference>
<dbReference type="Gene3D" id="3.30.390.10">
    <property type="entry name" value="Enolase-like, N-terminal domain"/>
    <property type="match status" value="1"/>
</dbReference>
<dbReference type="HAMAP" id="MF_00318">
    <property type="entry name" value="Enolase"/>
    <property type="match status" value="1"/>
</dbReference>
<dbReference type="InterPro" id="IPR000941">
    <property type="entry name" value="Enolase"/>
</dbReference>
<dbReference type="InterPro" id="IPR036849">
    <property type="entry name" value="Enolase-like_C_sf"/>
</dbReference>
<dbReference type="InterPro" id="IPR029017">
    <property type="entry name" value="Enolase-like_N"/>
</dbReference>
<dbReference type="InterPro" id="IPR020810">
    <property type="entry name" value="Enolase_C"/>
</dbReference>
<dbReference type="InterPro" id="IPR020809">
    <property type="entry name" value="Enolase_CS"/>
</dbReference>
<dbReference type="InterPro" id="IPR020811">
    <property type="entry name" value="Enolase_N"/>
</dbReference>
<dbReference type="NCBIfam" id="TIGR01060">
    <property type="entry name" value="eno"/>
    <property type="match status" value="1"/>
</dbReference>
<dbReference type="PANTHER" id="PTHR11902">
    <property type="entry name" value="ENOLASE"/>
    <property type="match status" value="1"/>
</dbReference>
<dbReference type="PANTHER" id="PTHR11902:SF1">
    <property type="entry name" value="ENOLASE"/>
    <property type="match status" value="1"/>
</dbReference>
<dbReference type="Pfam" id="PF00113">
    <property type="entry name" value="Enolase_C"/>
    <property type="match status" value="1"/>
</dbReference>
<dbReference type="Pfam" id="PF03952">
    <property type="entry name" value="Enolase_N"/>
    <property type="match status" value="1"/>
</dbReference>
<dbReference type="PIRSF" id="PIRSF001400">
    <property type="entry name" value="Enolase"/>
    <property type="match status" value="1"/>
</dbReference>
<dbReference type="PRINTS" id="PR00148">
    <property type="entry name" value="ENOLASE"/>
</dbReference>
<dbReference type="SFLD" id="SFLDS00001">
    <property type="entry name" value="Enolase"/>
    <property type="match status" value="1"/>
</dbReference>
<dbReference type="SFLD" id="SFLDF00002">
    <property type="entry name" value="enolase"/>
    <property type="match status" value="1"/>
</dbReference>
<dbReference type="SMART" id="SM01192">
    <property type="entry name" value="Enolase_C"/>
    <property type="match status" value="1"/>
</dbReference>
<dbReference type="SMART" id="SM01193">
    <property type="entry name" value="Enolase_N"/>
    <property type="match status" value="1"/>
</dbReference>
<dbReference type="SUPFAM" id="SSF51604">
    <property type="entry name" value="Enolase C-terminal domain-like"/>
    <property type="match status" value="1"/>
</dbReference>
<dbReference type="SUPFAM" id="SSF54826">
    <property type="entry name" value="Enolase N-terminal domain-like"/>
    <property type="match status" value="1"/>
</dbReference>
<dbReference type="PROSITE" id="PS00164">
    <property type="entry name" value="ENOLASE"/>
    <property type="match status" value="1"/>
</dbReference>
<sequence>MTTIVRIFGREILDSRGNPTVEADVYLADGSMGRAAVPSGASTGEHEAVELRDGDKGRYLGKGCLNAAKHINGEIATALHGKDATQQGEIDGAMIALDGTPNKGRLGANAILAVSMATARAAAAAQRTPLYRYLGGVGANTLPVPMMNIINGGAHADNSVDLQEFMVAPFGAKSFSEALRMGVEVFHTLKKVLSKKGYSTAVGDEGGFAPMLKSNEEAIESCLEAITQAGFKPGENVGICLDPASSEFFKGGKYVFKKSDKSERTSEQMVEFWANWVRQYPAILSIEDGMAEDDWAGWKLLTDTVGSKIQLVGDDLFVTNSTRLKQGIEGGVANSILVKVNQIGTLTETLEAMQMAANAGYTAVVSHRSGETEDPFIADLAVATNAGQIKTGSASRTDRICKYNQLLRIEERLGSSAVFPGRKAYSR</sequence>
<proteinExistence type="inferred from homology"/>
<name>ENO_SOLUE</name>
<comment type="function">
    <text evidence="1">Catalyzes the reversible conversion of 2-phosphoglycerate (2-PG) into phosphoenolpyruvate (PEP). It is essential for the degradation of carbohydrates via glycolysis.</text>
</comment>
<comment type="catalytic activity">
    <reaction evidence="1">
        <text>(2R)-2-phosphoglycerate = phosphoenolpyruvate + H2O</text>
        <dbReference type="Rhea" id="RHEA:10164"/>
        <dbReference type="ChEBI" id="CHEBI:15377"/>
        <dbReference type="ChEBI" id="CHEBI:58289"/>
        <dbReference type="ChEBI" id="CHEBI:58702"/>
        <dbReference type="EC" id="4.2.1.11"/>
    </reaction>
</comment>
<comment type="cofactor">
    <cofactor evidence="1">
        <name>Mg(2+)</name>
        <dbReference type="ChEBI" id="CHEBI:18420"/>
    </cofactor>
    <text evidence="1">Binds a second Mg(2+) ion via substrate during catalysis.</text>
</comment>
<comment type="pathway">
    <text evidence="1">Carbohydrate degradation; glycolysis; pyruvate from D-glyceraldehyde 3-phosphate: step 4/5.</text>
</comment>
<comment type="subcellular location">
    <subcellularLocation>
        <location evidence="1">Cytoplasm</location>
    </subcellularLocation>
    <subcellularLocation>
        <location evidence="1">Secreted</location>
    </subcellularLocation>
    <subcellularLocation>
        <location evidence="1">Cell surface</location>
    </subcellularLocation>
    <text evidence="1">Fractions of enolase are present in both the cytoplasm and on the cell surface.</text>
</comment>
<comment type="similarity">
    <text evidence="1">Belongs to the enolase family.</text>
</comment>
<gene>
    <name evidence="1" type="primary">eno</name>
    <name type="ordered locus">Acid_4373</name>
</gene>
<reference key="1">
    <citation type="journal article" date="2009" name="Appl. Environ. Microbiol.">
        <title>Three genomes from the phylum Acidobacteria provide insight into the lifestyles of these microorganisms in soils.</title>
        <authorList>
            <person name="Ward N.L."/>
            <person name="Challacombe J.F."/>
            <person name="Janssen P.H."/>
            <person name="Henrissat B."/>
            <person name="Coutinho P.M."/>
            <person name="Wu M."/>
            <person name="Xie G."/>
            <person name="Haft D.H."/>
            <person name="Sait M."/>
            <person name="Badger J."/>
            <person name="Barabote R.D."/>
            <person name="Bradley B."/>
            <person name="Brettin T.S."/>
            <person name="Brinkac L.M."/>
            <person name="Bruce D."/>
            <person name="Creasy T."/>
            <person name="Daugherty S.C."/>
            <person name="Davidsen T.M."/>
            <person name="DeBoy R.T."/>
            <person name="Detter J.C."/>
            <person name="Dodson R.J."/>
            <person name="Durkin A.S."/>
            <person name="Ganapathy A."/>
            <person name="Gwinn-Giglio M."/>
            <person name="Han C.S."/>
            <person name="Khouri H."/>
            <person name="Kiss H."/>
            <person name="Kothari S.P."/>
            <person name="Madupu R."/>
            <person name="Nelson K.E."/>
            <person name="Nelson W.C."/>
            <person name="Paulsen I."/>
            <person name="Penn K."/>
            <person name="Ren Q."/>
            <person name="Rosovitz M.J."/>
            <person name="Selengut J.D."/>
            <person name="Shrivastava S."/>
            <person name="Sullivan S.A."/>
            <person name="Tapia R."/>
            <person name="Thompson L.S."/>
            <person name="Watkins K.L."/>
            <person name="Yang Q."/>
            <person name="Yu C."/>
            <person name="Zafar N."/>
            <person name="Zhou L."/>
            <person name="Kuske C.R."/>
        </authorList>
    </citation>
    <scope>NUCLEOTIDE SEQUENCE [LARGE SCALE GENOMIC DNA]</scope>
    <source>
        <strain>Ellin6076</strain>
    </source>
</reference>
<feature type="chain" id="PRO_0000280877" description="Enolase">
    <location>
        <begin position="1"/>
        <end position="427"/>
    </location>
</feature>
<feature type="active site" description="Proton donor" evidence="1">
    <location>
        <position position="205"/>
    </location>
</feature>
<feature type="active site" description="Proton acceptor" evidence="1">
    <location>
        <position position="339"/>
    </location>
</feature>
<feature type="binding site" evidence="1">
    <location>
        <position position="163"/>
    </location>
    <ligand>
        <name>(2R)-2-phosphoglycerate</name>
        <dbReference type="ChEBI" id="CHEBI:58289"/>
    </ligand>
</feature>
<feature type="binding site" evidence="1">
    <location>
        <position position="242"/>
    </location>
    <ligand>
        <name>Mg(2+)</name>
        <dbReference type="ChEBI" id="CHEBI:18420"/>
    </ligand>
</feature>
<feature type="binding site" evidence="1">
    <location>
        <position position="287"/>
    </location>
    <ligand>
        <name>Mg(2+)</name>
        <dbReference type="ChEBI" id="CHEBI:18420"/>
    </ligand>
</feature>
<feature type="binding site" evidence="1">
    <location>
        <position position="314"/>
    </location>
    <ligand>
        <name>Mg(2+)</name>
        <dbReference type="ChEBI" id="CHEBI:18420"/>
    </ligand>
</feature>
<feature type="binding site" evidence="1">
    <location>
        <position position="339"/>
    </location>
    <ligand>
        <name>(2R)-2-phosphoglycerate</name>
        <dbReference type="ChEBI" id="CHEBI:58289"/>
    </ligand>
</feature>
<feature type="binding site" evidence="1">
    <location>
        <position position="368"/>
    </location>
    <ligand>
        <name>(2R)-2-phosphoglycerate</name>
        <dbReference type="ChEBI" id="CHEBI:58289"/>
    </ligand>
</feature>
<feature type="binding site" evidence="1">
    <location>
        <position position="369"/>
    </location>
    <ligand>
        <name>(2R)-2-phosphoglycerate</name>
        <dbReference type="ChEBI" id="CHEBI:58289"/>
    </ligand>
</feature>
<feature type="binding site" evidence="1">
    <location>
        <position position="390"/>
    </location>
    <ligand>
        <name>(2R)-2-phosphoglycerate</name>
        <dbReference type="ChEBI" id="CHEBI:58289"/>
    </ligand>
</feature>
<accession>Q01YD1</accession>